<feature type="signal peptide">
    <location>
        <begin position="1"/>
        <end position="22"/>
    </location>
</feature>
<feature type="chain" id="PRO_0000004287" description="Pheromone-processing carboxypeptidase KEX1">
    <location>
        <begin position="23"/>
        <end position="729"/>
    </location>
</feature>
<feature type="topological domain" description="Lumenal" evidence="2">
    <location>
        <begin position="23"/>
        <end position="616"/>
    </location>
</feature>
<feature type="transmembrane region" description="Helical" evidence="2">
    <location>
        <begin position="617"/>
        <end position="637"/>
    </location>
</feature>
<feature type="topological domain" description="Cytoplasmic" evidence="2">
    <location>
        <begin position="638"/>
        <end position="729"/>
    </location>
</feature>
<feature type="region of interest" description="Disordered" evidence="3">
    <location>
        <begin position="502"/>
        <end position="603"/>
    </location>
</feature>
<feature type="region of interest" description="Disordered" evidence="3">
    <location>
        <begin position="674"/>
        <end position="729"/>
    </location>
</feature>
<feature type="compositionally biased region" description="Acidic residues" evidence="3">
    <location>
        <begin position="525"/>
        <end position="534"/>
    </location>
</feature>
<feature type="compositionally biased region" description="Basic and acidic residues" evidence="3">
    <location>
        <begin position="535"/>
        <end position="547"/>
    </location>
</feature>
<feature type="compositionally biased region" description="Acidic residues" evidence="3">
    <location>
        <begin position="548"/>
        <end position="579"/>
    </location>
</feature>
<feature type="compositionally biased region" description="Acidic residues" evidence="3">
    <location>
        <begin position="674"/>
        <end position="687"/>
    </location>
</feature>
<feature type="compositionally biased region" description="Basic residues" evidence="3">
    <location>
        <begin position="702"/>
        <end position="712"/>
    </location>
</feature>
<feature type="compositionally biased region" description="Acidic residues" evidence="3">
    <location>
        <begin position="719"/>
        <end position="729"/>
    </location>
</feature>
<feature type="active site">
    <location>
        <position position="198"/>
    </location>
</feature>
<feature type="active site" evidence="1">
    <location>
        <position position="405"/>
    </location>
</feature>
<feature type="active site" evidence="1">
    <location>
        <position position="470"/>
    </location>
</feature>
<feature type="modified residue" description="Phosphoserine" evidence="18">
    <location>
        <position position="660"/>
    </location>
</feature>
<feature type="glycosylation site" description="N-linked (GlcNAc...) asparagine" evidence="2">
    <location>
        <position position="81"/>
    </location>
</feature>
<feature type="glycosylation site" description="N-linked (GlcNAc...) asparagine" evidence="8">
    <location>
        <position position="459"/>
    </location>
</feature>
<feature type="glycosylation site" description="N-linked (GlcNAc...) asparagine" evidence="8">
    <location>
        <position position="467"/>
    </location>
</feature>
<feature type="mutagenesis site" description="Inactivates enzyme." evidence="11">
    <original>S</original>
    <variation>A</variation>
    <location>
        <position position="198"/>
    </location>
</feature>
<feature type="helix" evidence="19">
    <location>
        <begin position="26"/>
        <end position="28"/>
    </location>
</feature>
<feature type="helix" evidence="19">
    <location>
        <begin position="33"/>
        <end position="35"/>
    </location>
</feature>
<feature type="helix" evidence="19">
    <location>
        <begin position="39"/>
        <end position="41"/>
    </location>
</feature>
<feature type="strand" evidence="19">
    <location>
        <begin position="50"/>
        <end position="57"/>
    </location>
</feature>
<feature type="strand" evidence="19">
    <location>
        <begin position="61"/>
        <end position="63"/>
    </location>
</feature>
<feature type="strand" evidence="19">
    <location>
        <begin position="72"/>
        <end position="79"/>
    </location>
</feature>
<feature type="helix" evidence="19">
    <location>
        <begin position="84"/>
        <end position="86"/>
    </location>
</feature>
<feature type="strand" evidence="19">
    <location>
        <begin position="91"/>
        <end position="95"/>
    </location>
</feature>
<feature type="turn" evidence="19">
    <location>
        <begin position="98"/>
        <end position="100"/>
    </location>
</feature>
<feature type="helix" evidence="19">
    <location>
        <begin position="104"/>
        <end position="109"/>
    </location>
</feature>
<feature type="strand" evidence="19">
    <location>
        <begin position="110"/>
        <end position="116"/>
    </location>
</feature>
<feature type="strand" evidence="19">
    <location>
        <begin position="122"/>
        <end position="124"/>
    </location>
</feature>
<feature type="helix" evidence="19">
    <location>
        <begin position="129"/>
        <end position="131"/>
    </location>
</feature>
<feature type="strand" evidence="19">
    <location>
        <begin position="133"/>
        <end position="138"/>
    </location>
</feature>
<feature type="helix" evidence="19">
    <location>
        <begin position="154"/>
        <end position="156"/>
    </location>
</feature>
<feature type="helix" evidence="19">
    <location>
        <begin position="166"/>
        <end position="183"/>
    </location>
</feature>
<feature type="helix" evidence="19">
    <location>
        <begin position="187"/>
        <end position="189"/>
    </location>
</feature>
<feature type="strand" evidence="19">
    <location>
        <begin position="190"/>
        <end position="198"/>
    </location>
</feature>
<feature type="helix" evidence="19">
    <location>
        <begin position="200"/>
        <end position="217"/>
    </location>
</feature>
<feature type="strand" evidence="19">
    <location>
        <begin position="226"/>
        <end position="235"/>
    </location>
</feature>
<feature type="helix" evidence="19">
    <location>
        <begin position="239"/>
        <end position="243"/>
    </location>
</feature>
<feature type="helix" evidence="19">
    <location>
        <begin position="246"/>
        <end position="252"/>
    </location>
</feature>
<feature type="helix" evidence="19">
    <location>
        <begin position="263"/>
        <end position="279"/>
    </location>
</feature>
<feature type="helix" evidence="19">
    <location>
        <begin position="283"/>
        <end position="286"/>
    </location>
</feature>
<feature type="strand" evidence="19">
    <location>
        <begin position="287"/>
        <end position="289"/>
    </location>
</feature>
<feature type="helix" evidence="19">
    <location>
        <begin position="291"/>
        <end position="294"/>
    </location>
</feature>
<feature type="helix" evidence="19">
    <location>
        <begin position="296"/>
        <end position="303"/>
    </location>
</feature>
<feature type="strand" evidence="19">
    <location>
        <begin position="314"/>
        <end position="317"/>
    </location>
</feature>
<feature type="strand" evidence="19">
    <location>
        <begin position="320"/>
        <end position="325"/>
    </location>
</feature>
<feature type="turn" evidence="19">
    <location>
        <begin position="327"/>
        <end position="333"/>
    </location>
</feature>
<feature type="helix" evidence="19">
    <location>
        <begin position="337"/>
        <end position="345"/>
    </location>
</feature>
<feature type="helix" evidence="19">
    <location>
        <begin position="350"/>
        <end position="353"/>
    </location>
</feature>
<feature type="turn" evidence="19">
    <location>
        <begin position="358"/>
        <end position="360"/>
    </location>
</feature>
<feature type="helix" evidence="19">
    <location>
        <begin position="369"/>
        <end position="374"/>
    </location>
</feature>
<feature type="helix" evidence="19">
    <location>
        <begin position="383"/>
        <end position="386"/>
    </location>
</feature>
<feature type="helix" evidence="19">
    <location>
        <begin position="387"/>
        <end position="392"/>
    </location>
</feature>
<feature type="strand" evidence="19">
    <location>
        <begin position="396"/>
        <end position="402"/>
    </location>
</feature>
<feature type="helix" evidence="19">
    <location>
        <begin position="410"/>
        <end position="419"/>
    </location>
</feature>
<feature type="strand" evidence="19">
    <location>
        <begin position="425"/>
        <end position="428"/>
    </location>
</feature>
<feature type="strand" evidence="19">
    <location>
        <begin position="433"/>
        <end position="439"/>
    </location>
</feature>
<feature type="strand" evidence="19">
    <location>
        <begin position="452"/>
        <end position="457"/>
    </location>
</feature>
<feature type="strand" evidence="19">
    <location>
        <begin position="460"/>
        <end position="465"/>
    </location>
</feature>
<feature type="helix" evidence="19">
    <location>
        <begin position="472"/>
        <end position="475"/>
    </location>
</feature>
<feature type="helix" evidence="19">
    <location>
        <begin position="477"/>
        <end position="487"/>
    </location>
</feature>
<feature type="strand" evidence="19">
    <location>
        <begin position="492"/>
        <end position="496"/>
    </location>
</feature>
<feature type="strand" evidence="19">
    <location>
        <begin position="499"/>
        <end position="504"/>
    </location>
</feature>
<proteinExistence type="evidence at protein level"/>
<keyword id="KW-0002">3D-structure</keyword>
<keyword id="KW-0053">Apoptosis</keyword>
<keyword id="KW-0121">Carboxypeptidase</keyword>
<keyword id="KW-0325">Glycoprotein</keyword>
<keyword id="KW-0333">Golgi apparatus</keyword>
<keyword id="KW-0378">Hydrolase</keyword>
<keyword id="KW-0472">Membrane</keyword>
<keyword id="KW-0597">Phosphoprotein</keyword>
<keyword id="KW-0645">Protease</keyword>
<keyword id="KW-1185">Reference proteome</keyword>
<keyword id="KW-0732">Signal</keyword>
<keyword id="KW-0812">Transmembrane</keyword>
<keyword id="KW-1133">Transmembrane helix</keyword>
<sequence>MFYNRWLGTWLAMSALIRISVSLPSSEEYKVAYELLPGLSEVPDPSNIPQMHAGHIPLRSEDADEQDSSDLEYFFWKFTNNDSNGNVDRPLIIWLNGGPGCSSMDGALVESGPFRVNSDGKLYLNEGSWISKGDLLFIDQPTGTGFSVEQNKDEGKIDKNKFDEDLEDVTKHFMDFLENYFKIFPEDLTRKIILSGESYAGQYIPFFANAILNHNKFSKIDGDTYDLKALLIGNGWIDPNTQSLSYLPFAMEKKLIDESNPNFKHLTNAHENCQNLINSASTDEAAHFSYQECENILNLLLSYTRESSQKGTADCLNMYNFNLKDSYPSCGMNWPKDISFVSKFFSTPGVIDSLHLDSDKIDHWKECTNSVGTKLSNPISKPSIHLLPGLLESGIEIVLFNGDKDLICNNKGVLDTIDNLKWGGIKGFSDDAVSFDWIHKSKSTDDSEEFSGYVKYDRNLTFVSVYNASHMVPFDKSLVSRGIVDIYSNDVMIIDNNGKNVMITTDDDSDQDATTESGDKPKENLEEEEQEAQNEEGKEKEGNKDKDGDDDNDNDDDDEDDHNSEGDDDDDDDDDEDDNNEKQSNQGLEDSRHKSSEYEQEEEEVEEFAEEISMYKHKAVVVTIVTFLIVVLGVYAYDRRVRRKARHTILVDPNNRQHDSPNKTVSWADDLESGLGAEDDLEQDEQLEGGAPISSTSNKAGSKLKTKKKKKYTSLPNTEIDESFEMTDF</sequence>
<accession>P09620</accession>
<accession>D6VTV1</accession>
<organism>
    <name type="scientific">Saccharomyces cerevisiae (strain ATCC 204508 / S288c)</name>
    <name type="common">Baker's yeast</name>
    <dbReference type="NCBI Taxonomy" id="559292"/>
    <lineage>
        <taxon>Eukaryota</taxon>
        <taxon>Fungi</taxon>
        <taxon>Dikarya</taxon>
        <taxon>Ascomycota</taxon>
        <taxon>Saccharomycotina</taxon>
        <taxon>Saccharomycetes</taxon>
        <taxon>Saccharomycetales</taxon>
        <taxon>Saccharomycetaceae</taxon>
        <taxon>Saccharomyces</taxon>
    </lineage>
</organism>
<name>KEX1_YEAST</name>
<comment type="function">
    <text evidence="4 5 8 9 10 11 12 13 14 15 16">Protease with a carboxypeptidase B-like function involved in the C-terminal processing of the lysine and arginine residues from the precursors of K1, K2 and K28 killer toxins and a-factor (mating pheromone). Involved in the programmed cell death caused by defective N-glycosylation and also contributes to the active cell death program induced by acetic acid stress or during chronological aging. Promotes cell fusion by proteolytically processing substrates that act in parallel to PRM1 as an alternative fusion machine, as cell wall components, or both.</text>
</comment>
<comment type="catalytic activity">
    <reaction>
        <text>Preferential release of a C-terminal arginine or lysine residue.</text>
        <dbReference type="EC" id="3.4.16.6"/>
    </reaction>
</comment>
<comment type="biophysicochemical properties">
    <kinetics>
        <KM evidence="16">284 uM for benzoyl-Phe-Ala-Arg</KM>
        <KM evidence="16">516 uM for furylacryloyl-Ala-Arg</KM>
        <KM evidence="16">962 uM for furylacryloyl-Ala-Lys</KM>
        <Vmax evidence="16">64.25 umol/min/mg enzyme toward benzoyl-Phe-Ala-Arg</Vmax>
        <Vmax evidence="16">22.35 umol/min/mg enzyme toward furylacryloyl-Ala-Arg</Vmax>
        <Vmax evidence="16">11.55 umol/min/mg enzyme toward furylacryloyl-Ala-Lys</Vmax>
    </kinetics>
</comment>
<comment type="interaction">
    <interactant intactId="EBI-9653">
        <id>P09620</id>
    </interactant>
    <interactant intactId="EBI-2421">
        <id>P39010</id>
        <label>AKR1</label>
    </interactant>
    <organismsDiffer>false</organismsDiffer>
    <experiments>3</experiments>
</comment>
<comment type="interaction">
    <interactant intactId="EBI-9653">
        <id>P09620</id>
    </interactant>
    <interactant intactId="EBI-4632">
        <id>P29465</id>
        <label>CHS3</label>
    </interactant>
    <organismsDiffer>false</organismsDiffer>
    <experiments>3</experiments>
</comment>
<comment type="interaction">
    <interactant intactId="EBI-9653">
        <id>P09620</id>
    </interactant>
    <interactant intactId="EBI-9658">
        <id>P13134</id>
        <label>KEX2</label>
    </interactant>
    <organismsDiffer>false</organismsDiffer>
    <experiments>3</experiments>
</comment>
<comment type="interaction">
    <interactant intactId="EBI-9653">
        <id>P09620</id>
    </interactant>
    <interactant intactId="EBI-26527">
        <id>P36164</id>
        <label>TVP38</label>
    </interactant>
    <organismsDiffer>false</organismsDiffer>
    <experiments>2</experiments>
</comment>
<comment type="subcellular location">
    <subcellularLocation>
        <location evidence="6 8">Golgi apparatus</location>
        <location evidence="6 8">trans-Golgi network membrane</location>
        <topology evidence="6 8">Single-pass type I membrane protein</topology>
    </subcellularLocation>
</comment>
<comment type="miscellaneous">
    <text evidence="7">Present with 8550 molecules/cell in log phase SD medium.</text>
</comment>
<comment type="similarity">
    <text evidence="17">Belongs to the peptidase S10 family.</text>
</comment>
<evidence type="ECO:0000250" key="1"/>
<evidence type="ECO:0000255" key="2"/>
<evidence type="ECO:0000256" key="3">
    <source>
        <dbReference type="SAM" id="MobiDB-lite"/>
    </source>
</evidence>
<evidence type="ECO:0000269" key="4">
    <source>
    </source>
</evidence>
<evidence type="ECO:0000269" key="5">
    <source>
    </source>
</evidence>
<evidence type="ECO:0000269" key="6">
    <source>
    </source>
</evidence>
<evidence type="ECO:0000269" key="7">
    <source>
    </source>
</evidence>
<evidence type="ECO:0000269" key="8">
    <source>
    </source>
</evidence>
<evidence type="ECO:0000269" key="9">
    <source>
    </source>
</evidence>
<evidence type="ECO:0000269" key="10">
    <source>
    </source>
</evidence>
<evidence type="ECO:0000269" key="11">
    <source>
    </source>
</evidence>
<evidence type="ECO:0000269" key="12">
    <source>
    </source>
</evidence>
<evidence type="ECO:0000269" key="13">
    <source>
    </source>
</evidence>
<evidence type="ECO:0000269" key="14">
    <source>
    </source>
</evidence>
<evidence type="ECO:0000269" key="15">
    <source>
    </source>
</evidence>
<evidence type="ECO:0000269" key="16">
    <source>
    </source>
</evidence>
<evidence type="ECO:0000305" key="17"/>
<evidence type="ECO:0007744" key="18">
    <source>
    </source>
</evidence>
<evidence type="ECO:0007829" key="19">
    <source>
        <dbReference type="PDB" id="1AC5"/>
    </source>
</evidence>
<protein>
    <recommendedName>
        <fullName>Pheromone-processing carboxypeptidase KEX1</fullName>
        <ecNumber>3.4.16.6</ecNumber>
    </recommendedName>
    <alternativeName>
        <fullName>Carboxypeptidase D</fullName>
    </alternativeName>
    <alternativeName>
        <fullName>Killer expression defective protein 1</fullName>
    </alternativeName>
</protein>
<dbReference type="EC" id="3.4.16.6"/>
<dbReference type="EMBL" id="M17231">
    <property type="protein sequence ID" value="AAA34717.1"/>
    <property type="molecule type" value="Genomic_DNA"/>
</dbReference>
<dbReference type="EMBL" id="Z72725">
    <property type="protein sequence ID" value="CAA96915.1"/>
    <property type="molecule type" value="Genomic_DNA"/>
</dbReference>
<dbReference type="EMBL" id="BK006941">
    <property type="protein sequence ID" value="DAA07912.1"/>
    <property type="molecule type" value="Genomic_DNA"/>
</dbReference>
<dbReference type="PIR" id="A29651">
    <property type="entry name" value="A29651"/>
</dbReference>
<dbReference type="RefSeq" id="NP_011312.1">
    <property type="nucleotide sequence ID" value="NM_001181068.1"/>
</dbReference>
<dbReference type="PDB" id="1AC5">
    <property type="method" value="X-ray"/>
    <property type="resolution" value="2.40 A"/>
    <property type="chains" value="A=23-505"/>
</dbReference>
<dbReference type="PDBsum" id="1AC5"/>
<dbReference type="SMR" id="P09620"/>
<dbReference type="BioGRID" id="33053">
    <property type="interactions" value="248"/>
</dbReference>
<dbReference type="FunCoup" id="P09620">
    <property type="interactions" value="149"/>
</dbReference>
<dbReference type="IntAct" id="P09620">
    <property type="interactions" value="76"/>
</dbReference>
<dbReference type="MINT" id="P09620"/>
<dbReference type="STRING" id="4932.YGL203C"/>
<dbReference type="ESTHER" id="yeast-kex01">
    <property type="family name" value="Carboxypeptidase_S10"/>
</dbReference>
<dbReference type="MEROPS" id="S10.007"/>
<dbReference type="GlyCosmos" id="P09620">
    <property type="glycosylation" value="3 sites, No reported glycans"/>
</dbReference>
<dbReference type="GlyGen" id="P09620">
    <property type="glycosylation" value="3 sites"/>
</dbReference>
<dbReference type="iPTMnet" id="P09620"/>
<dbReference type="PaxDb" id="4932-YGL203C"/>
<dbReference type="PeptideAtlas" id="P09620"/>
<dbReference type="EnsemblFungi" id="YGL203C_mRNA">
    <property type="protein sequence ID" value="YGL203C"/>
    <property type="gene ID" value="YGL203C"/>
</dbReference>
<dbReference type="GeneID" id="852670"/>
<dbReference type="KEGG" id="sce:YGL203C"/>
<dbReference type="AGR" id="SGD:S000003171"/>
<dbReference type="SGD" id="S000003171">
    <property type="gene designation" value="KEX1"/>
</dbReference>
<dbReference type="VEuPathDB" id="FungiDB:YGL203C"/>
<dbReference type="eggNOG" id="KOG1282">
    <property type="taxonomic scope" value="Eukaryota"/>
</dbReference>
<dbReference type="HOGENOM" id="CLU_008523_11_2_1"/>
<dbReference type="InParanoid" id="P09620"/>
<dbReference type="OMA" id="NAHENCQ"/>
<dbReference type="OrthoDB" id="443318at2759"/>
<dbReference type="BioCyc" id="MetaCyc:YGL203C-MONOMER"/>
<dbReference type="BioCyc" id="YEAST:YGL203C-MONOMER"/>
<dbReference type="BRENDA" id="3.4.16.6">
    <property type="organism ID" value="984"/>
</dbReference>
<dbReference type="BioGRID-ORCS" id="852670">
    <property type="hits" value="1 hit in 10 CRISPR screens"/>
</dbReference>
<dbReference type="EvolutionaryTrace" id="P09620"/>
<dbReference type="PRO" id="PR:P09620"/>
<dbReference type="Proteomes" id="UP000002311">
    <property type="component" value="Chromosome VII"/>
</dbReference>
<dbReference type="RNAct" id="P09620">
    <property type="molecule type" value="protein"/>
</dbReference>
<dbReference type="GO" id="GO:0000324">
    <property type="term" value="C:fungal-type vacuole"/>
    <property type="evidence" value="ECO:0007005"/>
    <property type="project" value="SGD"/>
</dbReference>
<dbReference type="GO" id="GO:0016020">
    <property type="term" value="C:membrane"/>
    <property type="evidence" value="ECO:0007669"/>
    <property type="project" value="UniProtKB-KW"/>
</dbReference>
<dbReference type="GO" id="GO:0005802">
    <property type="term" value="C:trans-Golgi network"/>
    <property type="evidence" value="ECO:0000314"/>
    <property type="project" value="SGD"/>
</dbReference>
<dbReference type="GO" id="GO:0004185">
    <property type="term" value="F:serine-type carboxypeptidase activity"/>
    <property type="evidence" value="ECO:0000314"/>
    <property type="project" value="SGD"/>
</dbReference>
<dbReference type="GO" id="GO:0006915">
    <property type="term" value="P:apoptotic process"/>
    <property type="evidence" value="ECO:0000315"/>
    <property type="project" value="SGD"/>
</dbReference>
<dbReference type="GO" id="GO:0006508">
    <property type="term" value="P:proteolysis"/>
    <property type="evidence" value="ECO:0007669"/>
    <property type="project" value="UniProtKB-KW"/>
</dbReference>
<dbReference type="FunFam" id="3.40.50.1820:FF:000289">
    <property type="entry name" value="Pheromone-processing carboxypeptidase KEX1"/>
    <property type="match status" value="1"/>
</dbReference>
<dbReference type="Gene3D" id="3.40.50.1820">
    <property type="entry name" value="alpha/beta hydrolase"/>
    <property type="match status" value="1"/>
</dbReference>
<dbReference type="InterPro" id="IPR029058">
    <property type="entry name" value="AB_hydrolase_fold"/>
</dbReference>
<dbReference type="InterPro" id="IPR001563">
    <property type="entry name" value="Peptidase_S10"/>
</dbReference>
<dbReference type="InterPro" id="IPR033124">
    <property type="entry name" value="Ser_caboxypep_his_AS"/>
</dbReference>
<dbReference type="InterPro" id="IPR018202">
    <property type="entry name" value="Ser_caboxypep_ser_AS"/>
</dbReference>
<dbReference type="PANTHER" id="PTHR11802:SF190">
    <property type="entry name" value="PHEROMONE-PROCESSING CARBOXYPEPTIDASE KEX1"/>
    <property type="match status" value="1"/>
</dbReference>
<dbReference type="PANTHER" id="PTHR11802">
    <property type="entry name" value="SERINE PROTEASE FAMILY S10 SERINE CARBOXYPEPTIDASE"/>
    <property type="match status" value="1"/>
</dbReference>
<dbReference type="Pfam" id="PF00450">
    <property type="entry name" value="Peptidase_S10"/>
    <property type="match status" value="1"/>
</dbReference>
<dbReference type="PRINTS" id="PR00724">
    <property type="entry name" value="CRBOXYPTASEC"/>
</dbReference>
<dbReference type="SUPFAM" id="SSF53474">
    <property type="entry name" value="alpha/beta-Hydrolases"/>
    <property type="match status" value="1"/>
</dbReference>
<dbReference type="PROSITE" id="PS00560">
    <property type="entry name" value="CARBOXYPEPT_SER_HIS"/>
    <property type="match status" value="1"/>
</dbReference>
<dbReference type="PROSITE" id="PS00131">
    <property type="entry name" value="CARBOXYPEPT_SER_SER"/>
    <property type="match status" value="1"/>
</dbReference>
<reference key="1">
    <citation type="journal article" date="1987" name="Cell">
        <title>Yeast KEX1 gene encodes a putative protease with a carboxypeptidase B-like function involved in killer toxin and alpha-factor precursor processing.</title>
        <authorList>
            <person name="Dmochowska A."/>
            <person name="Dignard D."/>
            <person name="Henning D."/>
            <person name="Thomas D.Y."/>
            <person name="Bussey H."/>
        </authorList>
    </citation>
    <scope>NUCLEOTIDE SEQUENCE [GENOMIC DNA]</scope>
    <scope>FUNCTION</scope>
    <scope>MUTAGENESIS OF SER-198</scope>
</reference>
<reference key="2">
    <citation type="journal article" date="1997" name="Nature">
        <title>The nucleotide sequence of Saccharomyces cerevisiae chromosome VII.</title>
        <authorList>
            <person name="Tettelin H."/>
            <person name="Agostoni-Carbone M.L."/>
            <person name="Albermann K."/>
            <person name="Albers M."/>
            <person name="Arroyo J."/>
            <person name="Backes U."/>
            <person name="Barreiros T."/>
            <person name="Bertani I."/>
            <person name="Bjourson A.J."/>
            <person name="Brueckner M."/>
            <person name="Bruschi C.V."/>
            <person name="Carignani G."/>
            <person name="Castagnoli L."/>
            <person name="Cerdan E."/>
            <person name="Clemente M.L."/>
            <person name="Coblenz A."/>
            <person name="Coglievina M."/>
            <person name="Coissac E."/>
            <person name="Defoor E."/>
            <person name="Del Bino S."/>
            <person name="Delius H."/>
            <person name="Delneri D."/>
            <person name="de Wergifosse P."/>
            <person name="Dujon B."/>
            <person name="Durand P."/>
            <person name="Entian K.-D."/>
            <person name="Eraso P."/>
            <person name="Escribano V."/>
            <person name="Fabiani L."/>
            <person name="Fartmann B."/>
            <person name="Feroli F."/>
            <person name="Feuermann M."/>
            <person name="Frontali L."/>
            <person name="Garcia-Gonzalez M."/>
            <person name="Garcia-Saez M.I."/>
            <person name="Goffeau A."/>
            <person name="Guerreiro P."/>
            <person name="Hani J."/>
            <person name="Hansen M."/>
            <person name="Hebling U."/>
            <person name="Hernandez K."/>
            <person name="Heumann K."/>
            <person name="Hilger F."/>
            <person name="Hofmann B."/>
            <person name="Indge K.J."/>
            <person name="James C.M."/>
            <person name="Klima R."/>
            <person name="Koetter P."/>
            <person name="Kramer B."/>
            <person name="Kramer W."/>
            <person name="Lauquin G."/>
            <person name="Leuther H."/>
            <person name="Louis E.J."/>
            <person name="Maillier E."/>
            <person name="Marconi A."/>
            <person name="Martegani E."/>
            <person name="Mazon M.J."/>
            <person name="Mazzoni C."/>
            <person name="McReynolds A.D.K."/>
            <person name="Melchioretto P."/>
            <person name="Mewes H.-W."/>
            <person name="Minenkova O."/>
            <person name="Mueller-Auer S."/>
            <person name="Nawrocki A."/>
            <person name="Netter P."/>
            <person name="Neu R."/>
            <person name="Nombela C."/>
            <person name="Oliver S.G."/>
            <person name="Panzeri L."/>
            <person name="Paoluzi S."/>
            <person name="Plevani P."/>
            <person name="Portetelle D."/>
            <person name="Portillo F."/>
            <person name="Potier S."/>
            <person name="Purnelle B."/>
            <person name="Rieger M."/>
            <person name="Riles L."/>
            <person name="Rinaldi T."/>
            <person name="Robben J."/>
            <person name="Rodrigues-Pousada C."/>
            <person name="Rodriguez-Belmonte E."/>
            <person name="Rodriguez-Torres A.M."/>
            <person name="Rose M."/>
            <person name="Ruzzi M."/>
            <person name="Saliola M."/>
            <person name="Sanchez-Perez M."/>
            <person name="Schaefer B."/>
            <person name="Schaefer M."/>
            <person name="Scharfe M."/>
            <person name="Schmidheini T."/>
            <person name="Schreer A."/>
            <person name="Skala J."/>
            <person name="Souciet J.-L."/>
            <person name="Steensma H.Y."/>
            <person name="Talla E."/>
            <person name="Thierry A."/>
            <person name="Vandenbol M."/>
            <person name="van der Aart Q.J.M."/>
            <person name="Van Dyck L."/>
            <person name="Vanoni M."/>
            <person name="Verhasselt P."/>
            <person name="Voet M."/>
            <person name="Volckaert G."/>
            <person name="Wambutt R."/>
            <person name="Watson M.D."/>
            <person name="Weber N."/>
            <person name="Wedler E."/>
            <person name="Wedler H."/>
            <person name="Wipfli P."/>
            <person name="Wolf K."/>
            <person name="Wright L.F."/>
            <person name="Zaccaria P."/>
            <person name="Zimmermann M."/>
            <person name="Zollner A."/>
            <person name="Kleine K."/>
        </authorList>
    </citation>
    <scope>NUCLEOTIDE SEQUENCE [LARGE SCALE GENOMIC DNA]</scope>
    <source>
        <strain>ATCC 204508 / S288c</strain>
    </source>
</reference>
<reference key="3">
    <citation type="journal article" date="2014" name="G3 (Bethesda)">
        <title>The reference genome sequence of Saccharomyces cerevisiae: Then and now.</title>
        <authorList>
            <person name="Engel S.R."/>
            <person name="Dietrich F.S."/>
            <person name="Fisk D.G."/>
            <person name="Binkley G."/>
            <person name="Balakrishnan R."/>
            <person name="Costanzo M.C."/>
            <person name="Dwight S.S."/>
            <person name="Hitz B.C."/>
            <person name="Karra K."/>
            <person name="Nash R.S."/>
            <person name="Weng S."/>
            <person name="Wong E.D."/>
            <person name="Lloyd P."/>
            <person name="Skrzypek M.S."/>
            <person name="Miyasato S.R."/>
            <person name="Simison M."/>
            <person name="Cherry J.M."/>
        </authorList>
    </citation>
    <scope>GENOME REANNOTATION</scope>
    <source>
        <strain>ATCC 204508 / S288c</strain>
    </source>
</reference>
<reference key="4">
    <citation type="journal article" date="1974" name="Genetics">
        <title>Chromosomal and nonchromosomal mutations affecting the 'killer character' of Saccharomyces cerevisiae.</title>
        <authorList>
            <person name="Wickner R.B."/>
        </authorList>
    </citation>
    <scope>FUNCTION</scope>
</reference>
<reference key="5">
    <citation type="journal article" date="1976" name="Genetics">
        <title>Two chromosomal genes required for killing expression in killer strains of Saccharomyces cerevisiae.</title>
        <authorList>
            <person name="Wickner R.B."/>
            <person name="Leibowitz M.J."/>
        </authorList>
    </citation>
    <scope>FUNCTION</scope>
</reference>
<reference key="6">
    <citation type="journal article" date="1987" name="FEBS Lett.">
        <title>Hormone (pheromone) processing enzymes in yeast. The carboxy-terminal processing enzyme of the mating pheromone alpha-factor, carboxypeptidase ysc alpha, is absent in alpha-factor maturation-defective kex1 mutant cells.</title>
        <authorList>
            <person name="Wagner J.C."/>
            <person name="Wolf D.H."/>
        </authorList>
    </citation>
    <scope>FUNCTION</scope>
</reference>
<reference key="7">
    <citation type="journal article" date="1987" name="J. Biol. Chem.">
        <title>Determination of the carboxyl termini of the alpha and beta subunits of yeast K1 killer toxin. Requirement of a carboxypeptidase B-like activity for maturation.</title>
        <authorList>
            <person name="Zhu H."/>
            <person name="Bussey H."/>
            <person name="Thomas D.Y."/>
            <person name="Gagnon J."/>
            <person name="Bell A.W."/>
        </authorList>
    </citation>
    <scope>FUNCTION</scope>
</reference>
<reference key="8">
    <citation type="journal article" date="1989" name="Mol. Cell. Biol.">
        <title>Characterization of the yeast KEX1 gene product: a carboxypeptidase involved in processing secreted precursor proteins.</title>
        <authorList>
            <person name="Cooper A."/>
            <person name="Bussey H."/>
        </authorList>
    </citation>
    <scope>CHARACTERIZATION</scope>
</reference>
<reference key="9">
    <citation type="journal article" date="1992" name="J. Cell Biol.">
        <title>Yeast Kex1p is a Golgi-associated membrane protein: deletions in a cytoplasmic targeting domain result in mislocalization to the vacuolar membrane.</title>
        <authorList>
            <person name="Cooper A."/>
            <person name="Bussey H."/>
        </authorList>
    </citation>
    <scope>GLYCOSYLATION</scope>
    <scope>FUNCTION</scope>
    <scope>SUBCELLULAR LOCATION</scope>
</reference>
<reference key="10">
    <citation type="journal article" date="1993" name="J. Biol. Chem.">
        <title>Expression, purification, and characterization of the yeast KEX1 gene product, a polypeptide precursor processing carboxypeptidase.</title>
        <authorList>
            <person name="Latchinian-Sadek L."/>
            <person name="Thomas D.Y."/>
        </authorList>
    </citation>
    <scope>FUNCTION</scope>
    <scope>BIOPHYSICOCHEMICAL PROPERTIES</scope>
</reference>
<reference key="11">
    <citation type="journal article" date="2000" name="Mol. Microbiol.">
        <title>Endocytotic uptake and retrograde transport of a virally encoded killer toxin in yeast.</title>
        <authorList>
            <person name="Eisfeld K."/>
            <person name="Riffer F."/>
            <person name="Mentges J."/>
            <person name="Schmitt M.J."/>
        </authorList>
    </citation>
    <scope>FUNCTION</scope>
</reference>
<reference key="12">
    <citation type="journal article" date="2002" name="Microbiology">
        <title>Mutational analysis of K28 preprotoxin processing in the yeast Saccharomyces cerevisiae.</title>
        <authorList>
            <person name="Riffer F."/>
            <person name="Eisfeld K."/>
            <person name="Breinig F."/>
            <person name="Schmitt M.J."/>
        </authorList>
    </citation>
    <scope>FUNCTION</scope>
</reference>
<reference key="13">
    <citation type="journal article" date="2003" name="Nature">
        <title>Global analysis of protein localization in budding yeast.</title>
        <authorList>
            <person name="Huh W.-K."/>
            <person name="Falvo J.V."/>
            <person name="Gerke L.C."/>
            <person name="Carroll A.S."/>
            <person name="Howson R.W."/>
            <person name="Weissman J.S."/>
            <person name="O'Shea E.K."/>
        </authorList>
    </citation>
    <scope>SUBCELLULAR LOCATION [LARGE SCALE ANALYSIS]</scope>
</reference>
<reference key="14">
    <citation type="journal article" date="2003" name="Nature">
        <title>Global analysis of protein expression in yeast.</title>
        <authorList>
            <person name="Ghaemmaghami S."/>
            <person name="Huh W.-K."/>
            <person name="Bower K."/>
            <person name="Howson R.W."/>
            <person name="Belle A."/>
            <person name="Dephoure N."/>
            <person name="O'Shea E.K."/>
            <person name="Weissman J.S."/>
        </authorList>
    </citation>
    <scope>LEVEL OF PROTEIN EXPRESSION [LARGE SCALE ANALYSIS]</scope>
</reference>
<reference key="15">
    <citation type="journal article" date="2007" name="J. Cell Biol.">
        <title>The Golgi-resident protease Kex2 acts in conjunction with Prm1 to facilitate cell fusion during yeast mating.</title>
        <authorList>
            <person name="Heiman M.G."/>
            <person name="Engel A."/>
            <person name="Walter P."/>
        </authorList>
    </citation>
    <scope>FUNCTION</scope>
</reference>
<reference key="16">
    <citation type="journal article" date="2007" name="Proc. Natl. Acad. Sci. U.S.A.">
        <title>Analysis of phosphorylation sites on proteins from Saccharomyces cerevisiae by electron transfer dissociation (ETD) mass spectrometry.</title>
        <authorList>
            <person name="Chi A."/>
            <person name="Huttenhower C."/>
            <person name="Geer L.Y."/>
            <person name="Coon J.J."/>
            <person name="Syka J.E.P."/>
            <person name="Bai D.L."/>
            <person name="Shabanowitz J."/>
            <person name="Burke D.J."/>
            <person name="Troyanskaya O.G."/>
            <person name="Hunt D.F."/>
        </authorList>
    </citation>
    <scope>PHOSPHORYLATION [LARGE SCALE ANALYSIS] AT SER-660</scope>
    <scope>IDENTIFICATION BY MASS SPECTROMETRY [LARGE SCALE ANALYSIS]</scope>
</reference>
<reference key="17">
    <citation type="journal article" date="2008" name="J. Biol. Chem.">
        <title>Kex1 protease is involved in yeast cell death induced by defective N-glycosylation, acetic acid, and chronological aging.</title>
        <authorList>
            <person name="Hauptmann P."/>
            <person name="Lehle L."/>
        </authorList>
    </citation>
    <scope>FUNCTION</scope>
</reference>
<reference key="18">
    <citation type="journal article" date="2009" name="Science">
        <title>Global analysis of Cdk1 substrate phosphorylation sites provides insights into evolution.</title>
        <authorList>
            <person name="Holt L.J."/>
            <person name="Tuch B.B."/>
            <person name="Villen J."/>
            <person name="Johnson A.D."/>
            <person name="Gygi S.P."/>
            <person name="Morgan D.O."/>
        </authorList>
    </citation>
    <scope>IDENTIFICATION BY MASS SPECTROMETRY [LARGE SCALE ANALYSIS]</scope>
</reference>
<reference key="19">
    <citation type="journal article" date="1996" name="Protein Sci.">
        <title>Crystallization of a soluble form of the Kex1p serine carboxypeptidase from Saccharomyces cerevisiae.</title>
        <authorList>
            <person name="Shilton B.H."/>
            <person name="Li Y."/>
            <person name="Tessier D."/>
            <person name="Thomas D.Y."/>
            <person name="Cygler M."/>
        </authorList>
    </citation>
    <scope>X-RAY CRYSTALLOGRAPHY (2.8 ANGSTROMS)</scope>
</reference>
<reference key="20">
    <citation type="journal article" date="1997" name="Biochemistry">
        <title>Crystal structure of Kex1deltap, a prohormone-processing carboxypeptidase from Saccharomyces cerevisiae.</title>
        <authorList>
            <person name="Shilton B.H."/>
            <person name="Thomas D.Y."/>
            <person name="Cygler M."/>
        </authorList>
    </citation>
    <scope>X-RAY CRYSTALLOGRAPHY (2.4 ANGSTROMS) OF 23-505</scope>
</reference>
<gene>
    <name type="primary">KEX1</name>
    <name type="ordered locus">YGL203C</name>
</gene>